<accession>P19834</accession>
<feature type="chain" id="PRO_0000075507" description="Insertion element IS116 uncharacterized 44.8 kDa protein">
    <location>
        <begin position="1"/>
        <end position="399"/>
    </location>
</feature>
<evidence type="ECO:0000305" key="1"/>
<protein>
    <recommendedName>
        <fullName>Insertion element IS116 uncharacterized 44.8 kDa protein</fullName>
    </recommendedName>
</protein>
<reference key="1">
    <citation type="journal article" date="1990" name="J. Gen. Microbiol.">
        <title>Discovery of an insertion sequence, IS116, from Streptomyces clavuligerus and its relatedness to other transposable elements from actinomycetes.</title>
        <authorList>
            <person name="Leskiw B.K."/>
            <person name="Mevarech M."/>
            <person name="Barritt L.S."/>
            <person name="Jensen S.E."/>
            <person name="Henderson D.J."/>
            <person name="Hopwood D.A."/>
            <person name="Bruton C.J."/>
            <person name="Chater K.F."/>
        </authorList>
    </citation>
    <scope>NUCLEOTIDE SEQUENCE [GENOMIC DNA]</scope>
    <source>
        <strain>ATCC 27064 / DSM 738 / JCM 4710 / NBRC 13307 / NCIMB 12785 / NRRL 3585 / VKM Ac-602</strain>
    </source>
</reference>
<dbReference type="EMBL" id="M31716">
    <property type="protein sequence ID" value="AAA26773.1"/>
    <property type="molecule type" value="Genomic_DNA"/>
</dbReference>
<dbReference type="PIR" id="A45825">
    <property type="entry name" value="A45825"/>
</dbReference>
<dbReference type="SMR" id="P19834"/>
<dbReference type="eggNOG" id="COG3547">
    <property type="taxonomic scope" value="Bacteria"/>
</dbReference>
<dbReference type="GO" id="GO:0003677">
    <property type="term" value="F:DNA binding"/>
    <property type="evidence" value="ECO:0007669"/>
    <property type="project" value="InterPro"/>
</dbReference>
<dbReference type="GO" id="GO:0004803">
    <property type="term" value="F:transposase activity"/>
    <property type="evidence" value="ECO:0007669"/>
    <property type="project" value="InterPro"/>
</dbReference>
<dbReference type="GO" id="GO:0006313">
    <property type="term" value="P:DNA transposition"/>
    <property type="evidence" value="ECO:0007669"/>
    <property type="project" value="InterPro"/>
</dbReference>
<dbReference type="InterPro" id="IPR002525">
    <property type="entry name" value="Transp_IS110-like_N"/>
</dbReference>
<dbReference type="InterPro" id="IPR047650">
    <property type="entry name" value="Transpos_IS110"/>
</dbReference>
<dbReference type="InterPro" id="IPR003346">
    <property type="entry name" value="Transposase_20"/>
</dbReference>
<dbReference type="NCBIfam" id="NF033542">
    <property type="entry name" value="transpos_IS110"/>
    <property type="match status" value="1"/>
</dbReference>
<dbReference type="PANTHER" id="PTHR33055:SF3">
    <property type="entry name" value="PUTATIVE TRANSPOSASE FOR IS117-RELATED"/>
    <property type="match status" value="1"/>
</dbReference>
<dbReference type="PANTHER" id="PTHR33055">
    <property type="entry name" value="TRANSPOSASE FOR INSERTION SEQUENCE ELEMENT IS1111A"/>
    <property type="match status" value="1"/>
</dbReference>
<dbReference type="Pfam" id="PF01548">
    <property type="entry name" value="DEDD_Tnp_IS110"/>
    <property type="match status" value="1"/>
</dbReference>
<dbReference type="Pfam" id="PF02371">
    <property type="entry name" value="Transposase_20"/>
    <property type="match status" value="1"/>
</dbReference>
<comment type="similarity">
    <text evidence="1">Belongs to the transposase IS1111A/IS1328/IS1533 family.</text>
</comment>
<name>YI11_STRCL</name>
<keyword id="KW-0814">Transposable element</keyword>
<organism>
    <name type="scientific">Streptomyces clavuligerus</name>
    <dbReference type="NCBI Taxonomy" id="1901"/>
    <lineage>
        <taxon>Bacteria</taxon>
        <taxon>Bacillati</taxon>
        <taxon>Actinomycetota</taxon>
        <taxon>Actinomycetes</taxon>
        <taxon>Kitasatosporales</taxon>
        <taxon>Streptomycetaceae</taxon>
        <taxon>Streptomyces</taxon>
    </lineage>
</organism>
<proteinExistence type="inferred from homology"/>
<sequence>MSTRHDRIWVGIDAGKGHHWAVAVDADGETLFSTKVINDEAQVLTLIETAREREEVRWAVDISGRASTLLLALLVAHGQNVVYVPGRTVNRMSGAYKGEGKTDAKDARVIADQARMRRDFAPLDRPPELVTTLRLLTNHRADLIADRVRLINRLRDLLTGICPALERAFDYSAAKGPVVMLTEYQTPAALRRTGVKRLTTWLGRRKVRDADTVAAKAIEAARTQQVVLPGEKRATKLVCDLAHQLLALDERIKDNDREIRETFRTDDRAEIIESMPGMGPVLGAEFVAIVGDLSGYKDAGRLASHAGLAPVPRDSGRRTGNYHRPQRYNRRLRWLFYMSAQTAMMRPGPSRDYYLKKRGEGLLHTQALLSLARRRVDVLWAMLRDKRLFTPAPPVTQTA</sequence>